<protein>
    <recommendedName>
        <fullName evidence="1">Large ribosomal subunit protein uL30</fullName>
    </recommendedName>
    <alternativeName>
        <fullName evidence="2">50S ribosomal protein L30</fullName>
    </alternativeName>
</protein>
<gene>
    <name evidence="1" type="primary">rpmD</name>
    <name type="ordered locus">xcc-b100_3441</name>
</gene>
<dbReference type="EMBL" id="AM920689">
    <property type="protein sequence ID" value="CAP52806.1"/>
    <property type="molecule type" value="Genomic_DNA"/>
</dbReference>
<dbReference type="SMR" id="B0RU64"/>
<dbReference type="KEGG" id="xca:xcc-b100_3441"/>
<dbReference type="HOGENOM" id="CLU_131047_1_4_6"/>
<dbReference type="Proteomes" id="UP000001188">
    <property type="component" value="Chromosome"/>
</dbReference>
<dbReference type="GO" id="GO:0022625">
    <property type="term" value="C:cytosolic large ribosomal subunit"/>
    <property type="evidence" value="ECO:0007669"/>
    <property type="project" value="TreeGrafter"/>
</dbReference>
<dbReference type="GO" id="GO:0003735">
    <property type="term" value="F:structural constituent of ribosome"/>
    <property type="evidence" value="ECO:0007669"/>
    <property type="project" value="InterPro"/>
</dbReference>
<dbReference type="GO" id="GO:0006412">
    <property type="term" value="P:translation"/>
    <property type="evidence" value="ECO:0007669"/>
    <property type="project" value="UniProtKB-UniRule"/>
</dbReference>
<dbReference type="CDD" id="cd00355">
    <property type="entry name" value="Ribosomal_L30_like"/>
    <property type="match status" value="1"/>
</dbReference>
<dbReference type="FunFam" id="3.30.1390.20:FF:000006">
    <property type="entry name" value="50S ribosomal protein L30"/>
    <property type="match status" value="1"/>
</dbReference>
<dbReference type="Gene3D" id="3.30.1390.20">
    <property type="entry name" value="Ribosomal protein L30, ferredoxin-like fold domain"/>
    <property type="match status" value="1"/>
</dbReference>
<dbReference type="HAMAP" id="MF_01371_B">
    <property type="entry name" value="Ribosomal_uL30_B"/>
    <property type="match status" value="1"/>
</dbReference>
<dbReference type="InterPro" id="IPR036919">
    <property type="entry name" value="Ribo_uL30_ferredoxin-like_sf"/>
</dbReference>
<dbReference type="InterPro" id="IPR005996">
    <property type="entry name" value="Ribosomal_uL30_bac-type"/>
</dbReference>
<dbReference type="InterPro" id="IPR016082">
    <property type="entry name" value="Ribosomal_uL30_ferredoxin-like"/>
</dbReference>
<dbReference type="NCBIfam" id="TIGR01308">
    <property type="entry name" value="rpmD_bact"/>
    <property type="match status" value="1"/>
</dbReference>
<dbReference type="PANTHER" id="PTHR15892:SF2">
    <property type="entry name" value="LARGE RIBOSOMAL SUBUNIT PROTEIN UL30M"/>
    <property type="match status" value="1"/>
</dbReference>
<dbReference type="PANTHER" id="PTHR15892">
    <property type="entry name" value="MITOCHONDRIAL RIBOSOMAL PROTEIN L30"/>
    <property type="match status" value="1"/>
</dbReference>
<dbReference type="Pfam" id="PF00327">
    <property type="entry name" value="Ribosomal_L30"/>
    <property type="match status" value="1"/>
</dbReference>
<dbReference type="PIRSF" id="PIRSF002211">
    <property type="entry name" value="Ribosomal_L30_bac-type"/>
    <property type="match status" value="1"/>
</dbReference>
<dbReference type="SUPFAM" id="SSF55129">
    <property type="entry name" value="Ribosomal protein L30p/L7e"/>
    <property type="match status" value="1"/>
</dbReference>
<comment type="subunit">
    <text evidence="1">Part of the 50S ribosomal subunit.</text>
</comment>
<comment type="similarity">
    <text evidence="1">Belongs to the universal ribosomal protein uL30 family.</text>
</comment>
<keyword id="KW-0687">Ribonucleoprotein</keyword>
<keyword id="KW-0689">Ribosomal protein</keyword>
<reference key="1">
    <citation type="journal article" date="2008" name="J. Biotechnol.">
        <title>The genome of Xanthomonas campestris pv. campestris B100 and its use for the reconstruction of metabolic pathways involved in xanthan biosynthesis.</title>
        <authorList>
            <person name="Vorhoelter F.-J."/>
            <person name="Schneiker S."/>
            <person name="Goesmann A."/>
            <person name="Krause L."/>
            <person name="Bekel T."/>
            <person name="Kaiser O."/>
            <person name="Linke B."/>
            <person name="Patschkowski T."/>
            <person name="Rueckert C."/>
            <person name="Schmid J."/>
            <person name="Sidhu V.K."/>
            <person name="Sieber V."/>
            <person name="Tauch A."/>
            <person name="Watt S.A."/>
            <person name="Weisshaar B."/>
            <person name="Becker A."/>
            <person name="Niehaus K."/>
            <person name="Puehler A."/>
        </authorList>
    </citation>
    <scope>NUCLEOTIDE SEQUENCE [LARGE SCALE GENOMIC DNA]</scope>
    <source>
        <strain>B100</strain>
    </source>
</reference>
<feature type="chain" id="PRO_0000347153" description="Large ribosomal subunit protein uL30">
    <location>
        <begin position="1"/>
        <end position="63"/>
    </location>
</feature>
<name>RL30_XANCB</name>
<evidence type="ECO:0000255" key="1">
    <source>
        <dbReference type="HAMAP-Rule" id="MF_01371"/>
    </source>
</evidence>
<evidence type="ECO:0000305" key="2"/>
<organism>
    <name type="scientific">Xanthomonas campestris pv. campestris (strain B100)</name>
    <dbReference type="NCBI Taxonomy" id="509169"/>
    <lineage>
        <taxon>Bacteria</taxon>
        <taxon>Pseudomonadati</taxon>
        <taxon>Pseudomonadota</taxon>
        <taxon>Gammaproteobacteria</taxon>
        <taxon>Lysobacterales</taxon>
        <taxon>Lysobacteraceae</taxon>
        <taxon>Xanthomonas</taxon>
    </lineage>
</organism>
<sequence>MAKDTGKTVKVRLVRGLRGTQSRHRLSVHALGLNKINDVRELKDSPQVRGLINTVHYLVKVED</sequence>
<accession>B0RU64</accession>
<proteinExistence type="inferred from homology"/>